<protein>
    <recommendedName>
        <fullName>Zinc finger protein 331</fullName>
    </recommendedName>
    <alternativeName>
        <fullName>C2H2-like zinc finger protein rearranged in thyroid adenomas</fullName>
    </alternativeName>
    <alternativeName>
        <fullName>Zinc finger protein 361</fullName>
    </alternativeName>
    <alternativeName>
        <fullName>Zinc finger protein 463</fullName>
    </alternativeName>
</protein>
<evidence type="ECO:0000255" key="1">
    <source>
        <dbReference type="PROSITE-ProRule" id="PRU00042"/>
    </source>
</evidence>
<evidence type="ECO:0000255" key="2">
    <source>
        <dbReference type="PROSITE-ProRule" id="PRU00119"/>
    </source>
</evidence>
<evidence type="ECO:0000305" key="3"/>
<evidence type="ECO:0007744" key="4">
    <source>
    </source>
</evidence>
<evidence type="ECO:0007744" key="5">
    <source>
    </source>
</evidence>
<feature type="chain" id="PRO_0000047535" description="Zinc finger protein 331">
    <location>
        <begin position="1"/>
        <end position="463"/>
    </location>
</feature>
<feature type="domain" description="KRAB" evidence="2">
    <location>
        <begin position="6"/>
        <end position="78"/>
    </location>
</feature>
<feature type="zinc finger region" description="C2H2-type 1" evidence="1">
    <location>
        <begin position="131"/>
        <end position="153"/>
    </location>
</feature>
<feature type="zinc finger region" description="C2H2-type 2" evidence="1">
    <location>
        <begin position="159"/>
        <end position="181"/>
    </location>
</feature>
<feature type="zinc finger region" description="C2H2-type 3" evidence="1">
    <location>
        <begin position="187"/>
        <end position="209"/>
    </location>
</feature>
<feature type="zinc finger region" description="C2H2-type 4" evidence="1">
    <location>
        <begin position="215"/>
        <end position="237"/>
    </location>
</feature>
<feature type="zinc finger region" description="C2H2-type 5" evidence="1">
    <location>
        <begin position="243"/>
        <end position="265"/>
    </location>
</feature>
<feature type="zinc finger region" description="C2H2-type 6" evidence="1">
    <location>
        <begin position="271"/>
        <end position="293"/>
    </location>
</feature>
<feature type="zinc finger region" description="C2H2-type 7" evidence="1">
    <location>
        <begin position="299"/>
        <end position="321"/>
    </location>
</feature>
<feature type="zinc finger region" description="C2H2-type 8" evidence="1">
    <location>
        <begin position="327"/>
        <end position="349"/>
    </location>
</feature>
<feature type="zinc finger region" description="C2H2-type 9" evidence="1">
    <location>
        <begin position="355"/>
        <end position="377"/>
    </location>
</feature>
<feature type="zinc finger region" description="C2H2-type 10" evidence="1">
    <location>
        <begin position="383"/>
        <end position="405"/>
    </location>
</feature>
<feature type="zinc finger region" description="C2H2-type 11" evidence="1">
    <location>
        <begin position="411"/>
        <end position="433"/>
    </location>
</feature>
<feature type="zinc finger region" description="C2H2-type 12" evidence="1">
    <location>
        <begin position="439"/>
        <end position="461"/>
    </location>
</feature>
<feature type="cross-link" description="Glycyl lysine isopeptide (Lys-Gly) (interchain with G-Cter in SUMO2)" evidence="5">
    <location>
        <position position="109"/>
    </location>
</feature>
<feature type="cross-link" description="Glycyl lysine isopeptide (Lys-Gly) (interchain with G-Cter in SUMO2)" evidence="4 5">
    <location>
        <position position="400"/>
    </location>
</feature>
<feature type="sequence conflict" description="In Ref. 3; AAH09433." evidence="3" ref="3">
    <original>E</original>
    <variation>K</variation>
    <location>
        <position position="59"/>
    </location>
</feature>
<reference key="1">
    <citation type="journal article" date="1999" name="Genes Chromosomes Cancer">
        <title>A KRAB zinc finger protein gene is the potential target of 19q13 translocation in benign thyroid tumors.</title>
        <authorList>
            <person name="Rippe V."/>
            <person name="Belge G."/>
            <person name="Meiboom M."/>
            <person name="Kazmierczak B."/>
            <person name="Fusco A."/>
            <person name="Bullerdiek J."/>
        </authorList>
    </citation>
    <scope>NUCLEOTIDE SEQUENCE [MRNA]</scope>
    <source>
        <tissue>Testis</tissue>
    </source>
</reference>
<reference key="2">
    <citation type="journal article" date="2001" name="Biochim. Biophys. Acta">
        <title>Isolation, characterization, and mapping of a novel human KRAB zinc finger protein encoding gene ZNF463.</title>
        <authorList>
            <person name="Wu H."/>
            <person name="Zhang S."/>
            <person name="Qiu W."/>
            <person name="Zhang G."/>
            <person name="Xia Q."/>
            <person name="Xiao C."/>
            <person name="Huang X."/>
            <person name="Huang M."/>
            <person name="Agen P."/>
            <person name="Fan T."/>
            <person name="Yang J."/>
            <person name="Milunsky A."/>
        </authorList>
    </citation>
    <scope>NUCLEOTIDE SEQUENCE [MRNA]</scope>
    <source>
        <tissue>Testis</tissue>
    </source>
</reference>
<reference key="3">
    <citation type="journal article" date="2004" name="Genome Res.">
        <title>The status, quality, and expansion of the NIH full-length cDNA project: the Mammalian Gene Collection (MGC).</title>
        <authorList>
            <consortium name="The MGC Project Team"/>
        </authorList>
    </citation>
    <scope>NUCLEOTIDE SEQUENCE [LARGE SCALE MRNA]</scope>
    <source>
        <tissue>Eye</tissue>
    </source>
</reference>
<reference key="4">
    <citation type="journal article" date="2014" name="Nat. Struct. Mol. Biol.">
        <title>Uncovering global SUMOylation signaling networks in a site-specific manner.</title>
        <authorList>
            <person name="Hendriks I.A."/>
            <person name="D'Souza R.C."/>
            <person name="Yang B."/>
            <person name="Verlaan-de Vries M."/>
            <person name="Mann M."/>
            <person name="Vertegaal A.C."/>
        </authorList>
    </citation>
    <scope>SUMOYLATION [LARGE SCALE ANALYSIS] AT LYS-400</scope>
    <scope>IDENTIFICATION BY MASS SPECTROMETRY [LARGE SCALE ANALYSIS]</scope>
</reference>
<reference key="5">
    <citation type="journal article" date="2017" name="Nat. Struct. Mol. Biol.">
        <title>Site-specific mapping of the human SUMO proteome reveals co-modification with phosphorylation.</title>
        <authorList>
            <person name="Hendriks I.A."/>
            <person name="Lyon D."/>
            <person name="Young C."/>
            <person name="Jensen L.J."/>
            <person name="Vertegaal A.C."/>
            <person name="Nielsen M.L."/>
        </authorList>
    </citation>
    <scope>SUMOYLATION [LARGE SCALE ANALYSIS] AT LYS-109 AND LYS-400</scope>
    <scope>IDENTIFICATION BY MASS SPECTROMETRY [LARGE SCALE ANALYSIS]</scope>
</reference>
<sequence length="463" mass="53739">MAQGLVTFADVAIDFSQEEWACLNSAQRDLYWDVMLENYSNLVSLDLESAYENKSLPTEKNIHEIRASKRNSDRRSKSLGRNWICEGTLERPQRSRGRYVNQMIINYVKRPATREGTPPRTHQRHHKENSFECKDCGKAFSRGYQLSQHQKIHTGEKPYECKECKKAFRWGNQLTQHQKIHTGEKPYECKDCGKAFRWGSSLVIHKRIHTGEKPYECKDCGKAFRRGDELTQHQRFHTGEKDYECKDCGKTFSRVYKLIQHKRIHSGEKPYECKDCGKAFICGSSLIQHKRIHTGEKPYECQECGKAFTRVNYLTQHQKIHTGEKPHECKECGKAFRWGSSLVKHERIHTGEKPYKCTECGKAFNCGYHLTQHERIHTGETPYKCKECGKAFIYGSSLVKHERIHTGVKPYGCTECGKSFSHGHQLTQHQKTHSGAKSYECKECGKACNHLNHLREHQRIHNS</sequence>
<proteinExistence type="evidence at protein level"/>
<comment type="function">
    <text>May be involved in transcriptional regulation. May play a role in spermatogenesis.</text>
</comment>
<comment type="interaction">
    <interactant intactId="EBI-1640372">
        <id>Q9NQX6</id>
    </interactant>
    <interactant intactId="EBI-358808">
        <id>O15397</id>
        <label>IPO8</label>
    </interactant>
    <organismsDiffer>false</organismsDiffer>
    <experiments>5</experiments>
</comment>
<comment type="subcellular location">
    <subcellularLocation>
        <location evidence="3">Nucleus</location>
    </subcellularLocation>
</comment>
<comment type="tissue specificity">
    <text>Testis specific.</text>
</comment>
<comment type="similarity">
    <text evidence="3">Belongs to the krueppel C2H2-type zinc-finger protein family.</text>
</comment>
<gene>
    <name type="primary">ZNF331</name>
    <name type="synonym">RITA</name>
    <name type="synonym">ZNF361</name>
    <name type="synonym">ZNF463</name>
</gene>
<organism>
    <name type="scientific">Homo sapiens</name>
    <name type="common">Human</name>
    <dbReference type="NCBI Taxonomy" id="9606"/>
    <lineage>
        <taxon>Eukaryota</taxon>
        <taxon>Metazoa</taxon>
        <taxon>Chordata</taxon>
        <taxon>Craniata</taxon>
        <taxon>Vertebrata</taxon>
        <taxon>Euteleostomi</taxon>
        <taxon>Mammalia</taxon>
        <taxon>Eutheria</taxon>
        <taxon>Euarchontoglires</taxon>
        <taxon>Primates</taxon>
        <taxon>Haplorrhini</taxon>
        <taxon>Catarrhini</taxon>
        <taxon>Hominidae</taxon>
        <taxon>Homo</taxon>
    </lineage>
</organism>
<accession>Q9NQX6</accession>
<accession>Q96GJ4</accession>
<keyword id="KW-0238">DNA-binding</keyword>
<keyword id="KW-1017">Isopeptide bond</keyword>
<keyword id="KW-0479">Metal-binding</keyword>
<keyword id="KW-0539">Nucleus</keyword>
<keyword id="KW-1267">Proteomics identification</keyword>
<keyword id="KW-1185">Reference proteome</keyword>
<keyword id="KW-0677">Repeat</keyword>
<keyword id="KW-0804">Transcription</keyword>
<keyword id="KW-0805">Transcription regulation</keyword>
<keyword id="KW-0832">Ubl conjugation</keyword>
<keyword id="KW-0862">Zinc</keyword>
<keyword id="KW-0863">Zinc-finger</keyword>
<dbReference type="EMBL" id="AF272148">
    <property type="protein sequence ID" value="AAF78075.1"/>
    <property type="molecule type" value="mRNA"/>
</dbReference>
<dbReference type="EMBL" id="AF251515">
    <property type="protein sequence ID" value="AAF70179.2"/>
    <property type="molecule type" value="mRNA"/>
</dbReference>
<dbReference type="EMBL" id="BC009433">
    <property type="protein sequence ID" value="AAH09433.1"/>
    <property type="molecule type" value="mRNA"/>
</dbReference>
<dbReference type="CCDS" id="CCDS33102.1"/>
<dbReference type="RefSeq" id="NP_001073375.1">
    <property type="nucleotide sequence ID" value="NM_001079906.2"/>
</dbReference>
<dbReference type="RefSeq" id="NP_001073376.1">
    <property type="nucleotide sequence ID" value="NM_001079907.1"/>
</dbReference>
<dbReference type="RefSeq" id="NP_001240727.1">
    <property type="nucleotide sequence ID" value="NM_001253798.2"/>
</dbReference>
<dbReference type="RefSeq" id="NP_001240728.1">
    <property type="nucleotide sequence ID" value="NM_001253799.2"/>
</dbReference>
<dbReference type="RefSeq" id="NP_001240729.1">
    <property type="nucleotide sequence ID" value="NM_001253800.3"/>
</dbReference>
<dbReference type="RefSeq" id="NP_001240730.1">
    <property type="nucleotide sequence ID" value="NM_001253801.2"/>
</dbReference>
<dbReference type="RefSeq" id="NP_001304042.1">
    <property type="nucleotide sequence ID" value="NM_001317113.2"/>
</dbReference>
<dbReference type="RefSeq" id="NP_001304043.1">
    <property type="nucleotide sequence ID" value="NM_001317114.2"/>
</dbReference>
<dbReference type="RefSeq" id="NP_001304044.1">
    <property type="nucleotide sequence ID" value="NM_001317115.2"/>
</dbReference>
<dbReference type="RefSeq" id="NP_001304045.1">
    <property type="nucleotide sequence ID" value="NM_001317116.2"/>
</dbReference>
<dbReference type="RefSeq" id="NP_001304046.1">
    <property type="nucleotide sequence ID" value="NM_001317117.1"/>
</dbReference>
<dbReference type="RefSeq" id="NP_001304047.1">
    <property type="nucleotide sequence ID" value="NM_001317118.1"/>
</dbReference>
<dbReference type="RefSeq" id="NP_001304048.1">
    <property type="nucleotide sequence ID" value="NM_001317119.1"/>
</dbReference>
<dbReference type="RefSeq" id="NP_001304049.1">
    <property type="nucleotide sequence ID" value="NM_001317120.2"/>
</dbReference>
<dbReference type="RefSeq" id="NP_001304050.1">
    <property type="nucleotide sequence ID" value="NM_001317121.1"/>
</dbReference>
<dbReference type="RefSeq" id="NP_061025.5">
    <property type="nucleotide sequence ID" value="NM_018555.5"/>
</dbReference>
<dbReference type="RefSeq" id="XP_011525378.1">
    <property type="nucleotide sequence ID" value="XM_011527076.4"/>
</dbReference>
<dbReference type="RefSeq" id="XP_011525380.1">
    <property type="nucleotide sequence ID" value="XM_011527078.4"/>
</dbReference>
<dbReference type="RefSeq" id="XP_016882425.1">
    <property type="nucleotide sequence ID" value="XM_017026936.1"/>
</dbReference>
<dbReference type="RefSeq" id="XP_016882426.1">
    <property type="nucleotide sequence ID" value="XM_017026937.1"/>
</dbReference>
<dbReference type="RefSeq" id="XP_016882427.1">
    <property type="nucleotide sequence ID" value="XM_017026938.1"/>
</dbReference>
<dbReference type="RefSeq" id="XP_016882428.1">
    <property type="nucleotide sequence ID" value="XM_017026939.1"/>
</dbReference>
<dbReference type="RefSeq" id="XP_016882429.1">
    <property type="nucleotide sequence ID" value="XM_017026940.2"/>
</dbReference>
<dbReference type="RefSeq" id="XP_047295005.1">
    <property type="nucleotide sequence ID" value="XM_047439049.1"/>
</dbReference>
<dbReference type="RefSeq" id="XP_047295006.1">
    <property type="nucleotide sequence ID" value="XM_047439050.1"/>
</dbReference>
<dbReference type="RefSeq" id="XP_047295007.1">
    <property type="nucleotide sequence ID" value="XM_047439051.1"/>
</dbReference>
<dbReference type="RefSeq" id="XP_047295009.1">
    <property type="nucleotide sequence ID" value="XM_047439053.1"/>
</dbReference>
<dbReference type="RefSeq" id="XP_047295010.1">
    <property type="nucleotide sequence ID" value="XM_047439054.1"/>
</dbReference>
<dbReference type="RefSeq" id="XP_047295011.1">
    <property type="nucleotide sequence ID" value="XM_047439055.1"/>
</dbReference>
<dbReference type="RefSeq" id="XP_047295012.1">
    <property type="nucleotide sequence ID" value="XM_047439056.1"/>
</dbReference>
<dbReference type="RefSeq" id="XP_047295013.1">
    <property type="nucleotide sequence ID" value="XM_047439057.1"/>
</dbReference>
<dbReference type="RefSeq" id="XP_047295014.1">
    <property type="nucleotide sequence ID" value="XM_047439058.1"/>
</dbReference>
<dbReference type="RefSeq" id="XP_047295015.1">
    <property type="nucleotide sequence ID" value="XM_047439059.1"/>
</dbReference>
<dbReference type="RefSeq" id="XP_047295016.1">
    <property type="nucleotide sequence ID" value="XM_047439060.1"/>
</dbReference>
<dbReference type="RefSeq" id="XP_054177355.1">
    <property type="nucleotide sequence ID" value="XM_054321380.1"/>
</dbReference>
<dbReference type="RefSeq" id="XP_054177356.1">
    <property type="nucleotide sequence ID" value="XM_054321381.1"/>
</dbReference>
<dbReference type="RefSeq" id="XP_054177357.1">
    <property type="nucleotide sequence ID" value="XM_054321382.1"/>
</dbReference>
<dbReference type="RefSeq" id="XP_054177358.1">
    <property type="nucleotide sequence ID" value="XM_054321383.1"/>
</dbReference>
<dbReference type="RefSeq" id="XP_054177359.1">
    <property type="nucleotide sequence ID" value="XM_054321384.1"/>
</dbReference>
<dbReference type="RefSeq" id="XP_054177360.1">
    <property type="nucleotide sequence ID" value="XM_054321385.1"/>
</dbReference>
<dbReference type="RefSeq" id="XP_054177361.1">
    <property type="nucleotide sequence ID" value="XM_054321386.1"/>
</dbReference>
<dbReference type="RefSeq" id="XP_054177362.1">
    <property type="nucleotide sequence ID" value="XM_054321387.1"/>
</dbReference>
<dbReference type="RefSeq" id="XP_054177363.1">
    <property type="nucleotide sequence ID" value="XM_054321388.1"/>
</dbReference>
<dbReference type="RefSeq" id="XP_054177364.1">
    <property type="nucleotide sequence ID" value="XM_054321389.1"/>
</dbReference>
<dbReference type="RefSeq" id="XP_054177365.1">
    <property type="nucleotide sequence ID" value="XM_054321390.1"/>
</dbReference>
<dbReference type="RefSeq" id="XP_054177366.1">
    <property type="nucleotide sequence ID" value="XM_054321391.1"/>
</dbReference>
<dbReference type="RefSeq" id="XP_054177367.1">
    <property type="nucleotide sequence ID" value="XM_054321392.1"/>
</dbReference>
<dbReference type="RefSeq" id="XP_054177368.1">
    <property type="nucleotide sequence ID" value="XM_054321393.1"/>
</dbReference>
<dbReference type="RefSeq" id="XP_054177369.1">
    <property type="nucleotide sequence ID" value="XM_054321394.1"/>
</dbReference>
<dbReference type="RefSeq" id="XP_054177370.1">
    <property type="nucleotide sequence ID" value="XM_054321395.1"/>
</dbReference>
<dbReference type="SMR" id="Q9NQX6"/>
<dbReference type="BioGRID" id="120663">
    <property type="interactions" value="63"/>
</dbReference>
<dbReference type="FunCoup" id="Q9NQX6">
    <property type="interactions" value="73"/>
</dbReference>
<dbReference type="IntAct" id="Q9NQX6">
    <property type="interactions" value="60"/>
</dbReference>
<dbReference type="MINT" id="Q9NQX6"/>
<dbReference type="STRING" id="9606.ENSP00000253144"/>
<dbReference type="iPTMnet" id="Q9NQX6"/>
<dbReference type="PhosphoSitePlus" id="Q9NQX6"/>
<dbReference type="BioMuta" id="ZNF331"/>
<dbReference type="DMDM" id="34925661"/>
<dbReference type="jPOST" id="Q9NQX6"/>
<dbReference type="MassIVE" id="Q9NQX6"/>
<dbReference type="PaxDb" id="9606-ENSP00000253144"/>
<dbReference type="PeptideAtlas" id="Q9NQX6"/>
<dbReference type="ProteomicsDB" id="82225"/>
<dbReference type="Pumba" id="Q9NQX6"/>
<dbReference type="Antibodypedia" id="32728">
    <property type="antibodies" value="116 antibodies from 19 providers"/>
</dbReference>
<dbReference type="DNASU" id="55422"/>
<dbReference type="Ensembl" id="ENST00000253144.13">
    <property type="protein sequence ID" value="ENSP00000253144.9"/>
    <property type="gene ID" value="ENSG00000130844.19"/>
</dbReference>
<dbReference type="Ensembl" id="ENST00000449416.6">
    <property type="protein sequence ID" value="ENSP00000393817.1"/>
    <property type="gene ID" value="ENSG00000130844.19"/>
</dbReference>
<dbReference type="Ensembl" id="ENST00000504493.6">
    <property type="protein sequence ID" value="ENSP00000425517.2"/>
    <property type="gene ID" value="ENSG00000130844.19"/>
</dbReference>
<dbReference type="Ensembl" id="ENST00000511154.5">
    <property type="protein sequence ID" value="ENSP00000421014.1"/>
    <property type="gene ID" value="ENSG00000130844.19"/>
</dbReference>
<dbReference type="Ensembl" id="ENST00000511593.6">
    <property type="protein sequence ID" value="ENSP00000427439.1"/>
    <property type="gene ID" value="ENSG00000130844.19"/>
</dbReference>
<dbReference type="Ensembl" id="ENST00000512387.6">
    <property type="protein sequence ID" value="ENSP00000421728.1"/>
    <property type="gene ID" value="ENSG00000130844.19"/>
</dbReference>
<dbReference type="Ensembl" id="ENST00000513999.5">
    <property type="protein sequence ID" value="ENSP00000423156.1"/>
    <property type="gene ID" value="ENSG00000130844.19"/>
</dbReference>
<dbReference type="Ensembl" id="ENST00000648122.1">
    <property type="protein sequence ID" value="ENSP00000496977.1"/>
    <property type="gene ID" value="ENSG00000130844.19"/>
</dbReference>
<dbReference type="Ensembl" id="ENST00000648236.1">
    <property type="protein sequence ID" value="ENSP00000497263.1"/>
    <property type="gene ID" value="ENSG00000130844.19"/>
</dbReference>
<dbReference type="Ensembl" id="ENST00000648397.1">
    <property type="protein sequence ID" value="ENSP00000497726.1"/>
    <property type="gene ID" value="ENSG00000130844.19"/>
</dbReference>
<dbReference type="Ensembl" id="ENST00000648511.1">
    <property type="protein sequence ID" value="ENSP00000497652.1"/>
    <property type="gene ID" value="ENSG00000130844.19"/>
</dbReference>
<dbReference type="Ensembl" id="ENST00000649326.1">
    <property type="protein sequence ID" value="ENSP00000498006.1"/>
    <property type="gene ID" value="ENSG00000130844.19"/>
</dbReference>
<dbReference type="GeneID" id="55422"/>
<dbReference type="KEGG" id="hsa:55422"/>
<dbReference type="MANE-Select" id="ENST00000449416.6">
    <property type="protein sequence ID" value="ENSP00000393817.1"/>
    <property type="RefSeq nucleotide sequence ID" value="NM_001079906.2"/>
    <property type="RefSeq protein sequence ID" value="NP_001073375.1"/>
</dbReference>
<dbReference type="UCSC" id="uc002qbx.2">
    <property type="organism name" value="human"/>
</dbReference>
<dbReference type="AGR" id="HGNC:15489"/>
<dbReference type="CTD" id="55422"/>
<dbReference type="DisGeNET" id="55422"/>
<dbReference type="GeneCards" id="ZNF331"/>
<dbReference type="HGNC" id="HGNC:15489">
    <property type="gene designation" value="ZNF331"/>
</dbReference>
<dbReference type="HPA" id="ENSG00000130844">
    <property type="expression patterns" value="Tissue enhanced (adrenal)"/>
</dbReference>
<dbReference type="MIM" id="606043">
    <property type="type" value="gene"/>
</dbReference>
<dbReference type="neXtProt" id="NX_Q9NQX6"/>
<dbReference type="OpenTargets" id="ENSG00000130844"/>
<dbReference type="PharmGKB" id="PA134866703"/>
<dbReference type="VEuPathDB" id="HostDB:ENSG00000130844"/>
<dbReference type="eggNOG" id="KOG1721">
    <property type="taxonomic scope" value="Eukaryota"/>
</dbReference>
<dbReference type="GeneTree" id="ENSGT00940000161267"/>
<dbReference type="HOGENOM" id="CLU_002678_44_0_1"/>
<dbReference type="InParanoid" id="Q9NQX6"/>
<dbReference type="OMA" id="LDWMCEG"/>
<dbReference type="OrthoDB" id="6591996at2759"/>
<dbReference type="PAN-GO" id="Q9NQX6">
    <property type="GO annotations" value="3 GO annotations based on evolutionary models"/>
</dbReference>
<dbReference type="PhylomeDB" id="Q9NQX6"/>
<dbReference type="TreeFam" id="TF341817"/>
<dbReference type="PathwayCommons" id="Q9NQX6"/>
<dbReference type="Reactome" id="R-HSA-212436">
    <property type="pathway name" value="Generic Transcription Pathway"/>
</dbReference>
<dbReference type="Reactome" id="R-HSA-9843940">
    <property type="pathway name" value="Regulation of endogenous retroelements by KRAB-ZFP proteins"/>
</dbReference>
<dbReference type="SignaLink" id="Q9NQX6"/>
<dbReference type="BioGRID-ORCS" id="55422">
    <property type="hits" value="12 hits in 1162 CRISPR screens"/>
</dbReference>
<dbReference type="ChiTaRS" id="ZNF331">
    <property type="organism name" value="human"/>
</dbReference>
<dbReference type="GeneWiki" id="ZNF331"/>
<dbReference type="GenomeRNAi" id="55422"/>
<dbReference type="Pharos" id="Q9NQX6">
    <property type="development level" value="Tbio"/>
</dbReference>
<dbReference type="PRO" id="PR:Q9NQX6"/>
<dbReference type="Proteomes" id="UP000005640">
    <property type="component" value="Chromosome 19"/>
</dbReference>
<dbReference type="RNAct" id="Q9NQX6">
    <property type="molecule type" value="protein"/>
</dbReference>
<dbReference type="Bgee" id="ENSG00000130844">
    <property type="expression patterns" value="Expressed in lower lobe of lung and 207 other cell types or tissues"/>
</dbReference>
<dbReference type="ExpressionAtlas" id="Q9NQX6">
    <property type="expression patterns" value="baseline and differential"/>
</dbReference>
<dbReference type="GO" id="GO:0005634">
    <property type="term" value="C:nucleus"/>
    <property type="evidence" value="ECO:0007669"/>
    <property type="project" value="UniProtKB-SubCell"/>
</dbReference>
<dbReference type="GO" id="GO:0000981">
    <property type="term" value="F:DNA-binding transcription factor activity, RNA polymerase II-specific"/>
    <property type="evidence" value="ECO:0000318"/>
    <property type="project" value="GO_Central"/>
</dbReference>
<dbReference type="GO" id="GO:0000978">
    <property type="term" value="F:RNA polymerase II cis-regulatory region sequence-specific DNA binding"/>
    <property type="evidence" value="ECO:0000318"/>
    <property type="project" value="GO_Central"/>
</dbReference>
<dbReference type="GO" id="GO:0008270">
    <property type="term" value="F:zinc ion binding"/>
    <property type="evidence" value="ECO:0000303"/>
    <property type="project" value="UniProtKB"/>
</dbReference>
<dbReference type="GO" id="GO:0006355">
    <property type="term" value="P:regulation of DNA-templated transcription"/>
    <property type="evidence" value="ECO:0000318"/>
    <property type="project" value="GO_Central"/>
</dbReference>
<dbReference type="CDD" id="cd07765">
    <property type="entry name" value="KRAB_A-box"/>
    <property type="match status" value="1"/>
</dbReference>
<dbReference type="FunFam" id="3.30.160.60:FF:000020">
    <property type="entry name" value="Zinc finger protein 14 homolog"/>
    <property type="match status" value="1"/>
</dbReference>
<dbReference type="FunFam" id="3.30.160.60:FF:000770">
    <property type="entry name" value="zinc finger protein 16"/>
    <property type="match status" value="1"/>
</dbReference>
<dbReference type="FunFam" id="3.30.160.60:FF:001425">
    <property type="entry name" value="Zinc finger protein 331"/>
    <property type="match status" value="1"/>
</dbReference>
<dbReference type="FunFam" id="3.30.160.60:FF:000382">
    <property type="entry name" value="zinc finger protein 35 isoform X4"/>
    <property type="match status" value="1"/>
</dbReference>
<dbReference type="FunFam" id="3.30.160.60:FF:000016">
    <property type="entry name" value="zinc finger protein 37 homolog"/>
    <property type="match status" value="1"/>
</dbReference>
<dbReference type="FunFam" id="3.30.160.60:FF:000044">
    <property type="entry name" value="zinc finger protein 37 homolog"/>
    <property type="match status" value="1"/>
</dbReference>
<dbReference type="FunFam" id="3.30.160.60:FF:000338">
    <property type="entry name" value="zinc finger protein 383"/>
    <property type="match status" value="1"/>
</dbReference>
<dbReference type="FunFam" id="3.30.160.60:FF:002254">
    <property type="entry name" value="Zinc finger protein 540"/>
    <property type="match status" value="2"/>
</dbReference>
<dbReference type="FunFam" id="3.30.160.60:FF:000281">
    <property type="entry name" value="Zinc finger protein 558 isoform X1"/>
    <property type="match status" value="1"/>
</dbReference>
<dbReference type="FunFam" id="3.30.160.60:FF:001432">
    <property type="entry name" value="Zinc finger protein 571"/>
    <property type="match status" value="1"/>
</dbReference>
<dbReference type="FunFam" id="3.30.160.60:FF:001933">
    <property type="entry name" value="Zinc finger protein 870"/>
    <property type="match status" value="1"/>
</dbReference>
<dbReference type="Gene3D" id="6.10.140.140">
    <property type="match status" value="1"/>
</dbReference>
<dbReference type="Gene3D" id="3.30.160.60">
    <property type="entry name" value="Classic Zinc Finger"/>
    <property type="match status" value="12"/>
</dbReference>
<dbReference type="InterPro" id="IPR050589">
    <property type="entry name" value="Ikaros_C2H2-ZF"/>
</dbReference>
<dbReference type="InterPro" id="IPR001909">
    <property type="entry name" value="KRAB"/>
</dbReference>
<dbReference type="InterPro" id="IPR036051">
    <property type="entry name" value="KRAB_dom_sf"/>
</dbReference>
<dbReference type="InterPro" id="IPR036236">
    <property type="entry name" value="Znf_C2H2_sf"/>
</dbReference>
<dbReference type="InterPro" id="IPR013087">
    <property type="entry name" value="Znf_C2H2_type"/>
</dbReference>
<dbReference type="PANTHER" id="PTHR24404:SF114">
    <property type="entry name" value="KLUMPFUSS, ISOFORM B-RELATED"/>
    <property type="match status" value="1"/>
</dbReference>
<dbReference type="PANTHER" id="PTHR24404">
    <property type="entry name" value="ZINC FINGER PROTEIN"/>
    <property type="match status" value="1"/>
</dbReference>
<dbReference type="Pfam" id="PF01352">
    <property type="entry name" value="KRAB"/>
    <property type="match status" value="1"/>
</dbReference>
<dbReference type="Pfam" id="PF00096">
    <property type="entry name" value="zf-C2H2"/>
    <property type="match status" value="10"/>
</dbReference>
<dbReference type="Pfam" id="PF13912">
    <property type="entry name" value="zf-C2H2_6"/>
    <property type="match status" value="2"/>
</dbReference>
<dbReference type="SMART" id="SM00349">
    <property type="entry name" value="KRAB"/>
    <property type="match status" value="1"/>
</dbReference>
<dbReference type="SMART" id="SM00355">
    <property type="entry name" value="ZnF_C2H2"/>
    <property type="match status" value="12"/>
</dbReference>
<dbReference type="SUPFAM" id="SSF57667">
    <property type="entry name" value="beta-beta-alpha zinc fingers"/>
    <property type="match status" value="7"/>
</dbReference>
<dbReference type="SUPFAM" id="SSF109640">
    <property type="entry name" value="KRAB domain (Kruppel-associated box)"/>
    <property type="match status" value="1"/>
</dbReference>
<dbReference type="PROSITE" id="PS50805">
    <property type="entry name" value="KRAB"/>
    <property type="match status" value="1"/>
</dbReference>
<dbReference type="PROSITE" id="PS00028">
    <property type="entry name" value="ZINC_FINGER_C2H2_1"/>
    <property type="match status" value="12"/>
</dbReference>
<dbReference type="PROSITE" id="PS50157">
    <property type="entry name" value="ZINC_FINGER_C2H2_2"/>
    <property type="match status" value="12"/>
</dbReference>
<name>ZN331_HUMAN</name>